<sequence length="103" mass="11721">MQNQRIRIRLKAFDYKLIDASTAEIVETAKRTGAQVRGPIPLPTRKERFTVLISPHVNKKARDQYEIRTHKRLIDIVEPTDKTVDALMRLDLAAGVDVQISLG</sequence>
<name>RS10_VIBPA</name>
<organism>
    <name type="scientific">Vibrio parahaemolyticus serotype O3:K6 (strain RIMD 2210633)</name>
    <dbReference type="NCBI Taxonomy" id="223926"/>
    <lineage>
        <taxon>Bacteria</taxon>
        <taxon>Pseudomonadati</taxon>
        <taxon>Pseudomonadota</taxon>
        <taxon>Gammaproteobacteria</taxon>
        <taxon>Vibrionales</taxon>
        <taxon>Vibrionaceae</taxon>
        <taxon>Vibrio</taxon>
    </lineage>
</organism>
<gene>
    <name evidence="1" type="primary">rpsJ</name>
    <name type="ordered locus">VP0256</name>
</gene>
<keyword id="KW-0687">Ribonucleoprotein</keyword>
<keyword id="KW-0689">Ribosomal protein</keyword>
<accession>P66346</accession>
<accession>Q87T14</accession>
<accession>Q8DE38</accession>
<protein>
    <recommendedName>
        <fullName evidence="1">Small ribosomal subunit protein uS10</fullName>
    </recommendedName>
    <alternativeName>
        <fullName evidence="2">30S ribosomal protein S10</fullName>
    </alternativeName>
</protein>
<dbReference type="EMBL" id="BA000031">
    <property type="protein sequence ID" value="BAC58519.1"/>
    <property type="molecule type" value="Genomic_DNA"/>
</dbReference>
<dbReference type="RefSeq" id="NP_796635.1">
    <property type="nucleotide sequence ID" value="NC_004603.1"/>
</dbReference>
<dbReference type="RefSeq" id="WP_004410492.1">
    <property type="nucleotide sequence ID" value="NC_004603.1"/>
</dbReference>
<dbReference type="SMR" id="P66346"/>
<dbReference type="GeneID" id="97171180"/>
<dbReference type="KEGG" id="vpa:VP0256"/>
<dbReference type="PATRIC" id="fig|223926.6.peg.247"/>
<dbReference type="eggNOG" id="COG0051">
    <property type="taxonomic scope" value="Bacteria"/>
</dbReference>
<dbReference type="HOGENOM" id="CLU_122625_1_3_6"/>
<dbReference type="PRO" id="PR:P66346"/>
<dbReference type="Proteomes" id="UP000002493">
    <property type="component" value="Chromosome 1"/>
</dbReference>
<dbReference type="GO" id="GO:1990904">
    <property type="term" value="C:ribonucleoprotein complex"/>
    <property type="evidence" value="ECO:0007669"/>
    <property type="project" value="UniProtKB-KW"/>
</dbReference>
<dbReference type="GO" id="GO:0005840">
    <property type="term" value="C:ribosome"/>
    <property type="evidence" value="ECO:0007669"/>
    <property type="project" value="UniProtKB-KW"/>
</dbReference>
<dbReference type="GO" id="GO:0003735">
    <property type="term" value="F:structural constituent of ribosome"/>
    <property type="evidence" value="ECO:0007669"/>
    <property type="project" value="InterPro"/>
</dbReference>
<dbReference type="GO" id="GO:0000049">
    <property type="term" value="F:tRNA binding"/>
    <property type="evidence" value="ECO:0007669"/>
    <property type="project" value="UniProtKB-UniRule"/>
</dbReference>
<dbReference type="GO" id="GO:0006412">
    <property type="term" value="P:translation"/>
    <property type="evidence" value="ECO:0007669"/>
    <property type="project" value="UniProtKB-UniRule"/>
</dbReference>
<dbReference type="FunFam" id="3.30.70.600:FF:000001">
    <property type="entry name" value="30S ribosomal protein S10"/>
    <property type="match status" value="1"/>
</dbReference>
<dbReference type="Gene3D" id="3.30.70.600">
    <property type="entry name" value="Ribosomal protein S10 domain"/>
    <property type="match status" value="1"/>
</dbReference>
<dbReference type="HAMAP" id="MF_00508">
    <property type="entry name" value="Ribosomal_uS10"/>
    <property type="match status" value="1"/>
</dbReference>
<dbReference type="InterPro" id="IPR001848">
    <property type="entry name" value="Ribosomal_uS10"/>
</dbReference>
<dbReference type="InterPro" id="IPR018268">
    <property type="entry name" value="Ribosomal_uS10_CS"/>
</dbReference>
<dbReference type="InterPro" id="IPR027486">
    <property type="entry name" value="Ribosomal_uS10_dom"/>
</dbReference>
<dbReference type="InterPro" id="IPR036838">
    <property type="entry name" value="Ribosomal_uS10_dom_sf"/>
</dbReference>
<dbReference type="NCBIfam" id="NF001861">
    <property type="entry name" value="PRK00596.1"/>
    <property type="match status" value="1"/>
</dbReference>
<dbReference type="NCBIfam" id="TIGR01049">
    <property type="entry name" value="rpsJ_bact"/>
    <property type="match status" value="1"/>
</dbReference>
<dbReference type="PANTHER" id="PTHR11700">
    <property type="entry name" value="30S RIBOSOMAL PROTEIN S10 FAMILY MEMBER"/>
    <property type="match status" value="1"/>
</dbReference>
<dbReference type="Pfam" id="PF00338">
    <property type="entry name" value="Ribosomal_S10"/>
    <property type="match status" value="1"/>
</dbReference>
<dbReference type="PRINTS" id="PR00971">
    <property type="entry name" value="RIBOSOMALS10"/>
</dbReference>
<dbReference type="SMART" id="SM01403">
    <property type="entry name" value="Ribosomal_S10"/>
    <property type="match status" value="1"/>
</dbReference>
<dbReference type="SUPFAM" id="SSF54999">
    <property type="entry name" value="Ribosomal protein S10"/>
    <property type="match status" value="1"/>
</dbReference>
<dbReference type="PROSITE" id="PS00361">
    <property type="entry name" value="RIBOSOMAL_S10"/>
    <property type="match status" value="1"/>
</dbReference>
<evidence type="ECO:0000255" key="1">
    <source>
        <dbReference type="HAMAP-Rule" id="MF_00508"/>
    </source>
</evidence>
<evidence type="ECO:0000305" key="2"/>
<proteinExistence type="inferred from homology"/>
<feature type="chain" id="PRO_0000146630" description="Small ribosomal subunit protein uS10">
    <location>
        <begin position="1"/>
        <end position="103"/>
    </location>
</feature>
<reference key="1">
    <citation type="journal article" date="2003" name="Lancet">
        <title>Genome sequence of Vibrio parahaemolyticus: a pathogenic mechanism distinct from that of V. cholerae.</title>
        <authorList>
            <person name="Makino K."/>
            <person name="Oshima K."/>
            <person name="Kurokawa K."/>
            <person name="Yokoyama K."/>
            <person name="Uda T."/>
            <person name="Tagomori K."/>
            <person name="Iijima Y."/>
            <person name="Najima M."/>
            <person name="Nakano M."/>
            <person name="Yamashita A."/>
            <person name="Kubota Y."/>
            <person name="Kimura S."/>
            <person name="Yasunaga T."/>
            <person name="Honda T."/>
            <person name="Shinagawa H."/>
            <person name="Hattori M."/>
            <person name="Iida T."/>
        </authorList>
    </citation>
    <scope>NUCLEOTIDE SEQUENCE [LARGE SCALE GENOMIC DNA]</scope>
    <source>
        <strain>RIMD 2210633</strain>
    </source>
</reference>
<comment type="function">
    <text evidence="1">Involved in the binding of tRNA to the ribosomes.</text>
</comment>
<comment type="subunit">
    <text evidence="1">Part of the 30S ribosomal subunit.</text>
</comment>
<comment type="similarity">
    <text evidence="1">Belongs to the universal ribosomal protein uS10 family.</text>
</comment>